<dbReference type="EMBL" id="CP000576">
    <property type="protein sequence ID" value="ABO18324.1"/>
    <property type="molecule type" value="Genomic_DNA"/>
</dbReference>
<dbReference type="RefSeq" id="WP_002806267.1">
    <property type="nucleotide sequence ID" value="NC_009091.1"/>
</dbReference>
<dbReference type="SMR" id="A3PEZ9"/>
<dbReference type="STRING" id="167546.P9301_17011"/>
<dbReference type="KEGG" id="pmg:P9301_17011"/>
<dbReference type="eggNOG" id="COG0049">
    <property type="taxonomic scope" value="Bacteria"/>
</dbReference>
<dbReference type="HOGENOM" id="CLU_072226_1_1_3"/>
<dbReference type="OrthoDB" id="9807653at2"/>
<dbReference type="Proteomes" id="UP000001430">
    <property type="component" value="Chromosome"/>
</dbReference>
<dbReference type="GO" id="GO:0015935">
    <property type="term" value="C:small ribosomal subunit"/>
    <property type="evidence" value="ECO:0007669"/>
    <property type="project" value="InterPro"/>
</dbReference>
<dbReference type="GO" id="GO:0019843">
    <property type="term" value="F:rRNA binding"/>
    <property type="evidence" value="ECO:0007669"/>
    <property type="project" value="UniProtKB-UniRule"/>
</dbReference>
<dbReference type="GO" id="GO:0003735">
    <property type="term" value="F:structural constituent of ribosome"/>
    <property type="evidence" value="ECO:0007669"/>
    <property type="project" value="InterPro"/>
</dbReference>
<dbReference type="GO" id="GO:0000049">
    <property type="term" value="F:tRNA binding"/>
    <property type="evidence" value="ECO:0007669"/>
    <property type="project" value="UniProtKB-UniRule"/>
</dbReference>
<dbReference type="GO" id="GO:0006412">
    <property type="term" value="P:translation"/>
    <property type="evidence" value="ECO:0007669"/>
    <property type="project" value="UniProtKB-UniRule"/>
</dbReference>
<dbReference type="CDD" id="cd14869">
    <property type="entry name" value="uS7_Bacteria"/>
    <property type="match status" value="1"/>
</dbReference>
<dbReference type="FunFam" id="1.10.455.10:FF:000001">
    <property type="entry name" value="30S ribosomal protein S7"/>
    <property type="match status" value="1"/>
</dbReference>
<dbReference type="Gene3D" id="1.10.455.10">
    <property type="entry name" value="Ribosomal protein S7 domain"/>
    <property type="match status" value="1"/>
</dbReference>
<dbReference type="HAMAP" id="MF_00480_B">
    <property type="entry name" value="Ribosomal_uS7_B"/>
    <property type="match status" value="1"/>
</dbReference>
<dbReference type="InterPro" id="IPR000235">
    <property type="entry name" value="Ribosomal_uS7"/>
</dbReference>
<dbReference type="InterPro" id="IPR005717">
    <property type="entry name" value="Ribosomal_uS7_bac/org-type"/>
</dbReference>
<dbReference type="InterPro" id="IPR020606">
    <property type="entry name" value="Ribosomal_uS7_CS"/>
</dbReference>
<dbReference type="InterPro" id="IPR023798">
    <property type="entry name" value="Ribosomal_uS7_dom"/>
</dbReference>
<dbReference type="InterPro" id="IPR036823">
    <property type="entry name" value="Ribosomal_uS7_dom_sf"/>
</dbReference>
<dbReference type="NCBIfam" id="TIGR01029">
    <property type="entry name" value="rpsG_bact"/>
    <property type="match status" value="1"/>
</dbReference>
<dbReference type="PANTHER" id="PTHR11205">
    <property type="entry name" value="RIBOSOMAL PROTEIN S7"/>
    <property type="match status" value="1"/>
</dbReference>
<dbReference type="Pfam" id="PF00177">
    <property type="entry name" value="Ribosomal_S7"/>
    <property type="match status" value="1"/>
</dbReference>
<dbReference type="PIRSF" id="PIRSF002122">
    <property type="entry name" value="RPS7p_RPS7a_RPS5e_RPS7o"/>
    <property type="match status" value="1"/>
</dbReference>
<dbReference type="SUPFAM" id="SSF47973">
    <property type="entry name" value="Ribosomal protein S7"/>
    <property type="match status" value="1"/>
</dbReference>
<dbReference type="PROSITE" id="PS00052">
    <property type="entry name" value="RIBOSOMAL_S7"/>
    <property type="match status" value="1"/>
</dbReference>
<comment type="function">
    <text evidence="1">One of the primary rRNA binding proteins, it binds directly to 16S rRNA where it nucleates assembly of the head domain of the 30S subunit. Is located at the subunit interface close to the decoding center, probably blocks exit of the E-site tRNA.</text>
</comment>
<comment type="subunit">
    <text evidence="1">Part of the 30S ribosomal subunit. Contacts proteins S9 and S11.</text>
</comment>
<comment type="similarity">
    <text evidence="1">Belongs to the universal ribosomal protein uS7 family.</text>
</comment>
<feature type="chain" id="PRO_1000014254" description="Small ribosomal subunit protein uS7">
    <location>
        <begin position="1"/>
        <end position="156"/>
    </location>
</feature>
<protein>
    <recommendedName>
        <fullName evidence="1">Small ribosomal subunit protein uS7</fullName>
    </recommendedName>
    <alternativeName>
        <fullName evidence="2">30S ribosomal protein S7</fullName>
    </alternativeName>
</protein>
<gene>
    <name evidence="1" type="primary">rpsG</name>
    <name evidence="1" type="synonym">rps7</name>
    <name type="ordered locus">P9301_17011</name>
</gene>
<organism>
    <name type="scientific">Prochlorococcus marinus (strain MIT 9301)</name>
    <dbReference type="NCBI Taxonomy" id="167546"/>
    <lineage>
        <taxon>Bacteria</taxon>
        <taxon>Bacillati</taxon>
        <taxon>Cyanobacteriota</taxon>
        <taxon>Cyanophyceae</taxon>
        <taxon>Synechococcales</taxon>
        <taxon>Prochlorococcaceae</taxon>
        <taxon>Prochlorococcus</taxon>
    </lineage>
</organism>
<name>RS7_PROM0</name>
<reference key="1">
    <citation type="journal article" date="2007" name="PLoS Genet.">
        <title>Patterns and implications of gene gain and loss in the evolution of Prochlorococcus.</title>
        <authorList>
            <person name="Kettler G.C."/>
            <person name="Martiny A.C."/>
            <person name="Huang K."/>
            <person name="Zucker J."/>
            <person name="Coleman M.L."/>
            <person name="Rodrigue S."/>
            <person name="Chen F."/>
            <person name="Lapidus A."/>
            <person name="Ferriera S."/>
            <person name="Johnson J."/>
            <person name="Steglich C."/>
            <person name="Church G.M."/>
            <person name="Richardson P."/>
            <person name="Chisholm S.W."/>
        </authorList>
    </citation>
    <scope>NUCLEOTIDE SEQUENCE [LARGE SCALE GENOMIC DNA]</scope>
    <source>
        <strain>MIT 9301</strain>
    </source>
</reference>
<evidence type="ECO:0000255" key="1">
    <source>
        <dbReference type="HAMAP-Rule" id="MF_00480"/>
    </source>
</evidence>
<evidence type="ECO:0000305" key="2"/>
<accession>A3PEZ9</accession>
<keyword id="KW-1185">Reference proteome</keyword>
<keyword id="KW-0687">Ribonucleoprotein</keyword>
<keyword id="KW-0689">Ribosomal protein</keyword>
<keyword id="KW-0694">RNA-binding</keyword>
<keyword id="KW-0699">rRNA-binding</keyword>
<keyword id="KW-0820">tRNA-binding</keyword>
<proteinExistence type="inferred from homology"/>
<sequence length="156" mass="17399">MSRRNAAVKRPVLPDPQFNSRLASMMISRLMKHGKKSTAQRILSDAFSLISERTGGNAVELFETAVKNATPLVEVRARRVGGATYQVPMEVRQERGTAMALRWLVTFSRARNGKSMSQKLAGELMDAANETGSAVKKREDTHKMAEANKAFAHYRY</sequence>